<reference key="1">
    <citation type="submission" date="2006-12" db="EMBL/GenBank/DDBJ databases">
        <title>Complete sequence of Acidovorax avenae subsp. citrulli AAC00-1.</title>
        <authorList>
            <person name="Copeland A."/>
            <person name="Lucas S."/>
            <person name="Lapidus A."/>
            <person name="Barry K."/>
            <person name="Detter J.C."/>
            <person name="Glavina del Rio T."/>
            <person name="Dalin E."/>
            <person name="Tice H."/>
            <person name="Pitluck S."/>
            <person name="Kiss H."/>
            <person name="Brettin T."/>
            <person name="Bruce D."/>
            <person name="Han C."/>
            <person name="Tapia R."/>
            <person name="Gilna P."/>
            <person name="Schmutz J."/>
            <person name="Larimer F."/>
            <person name="Land M."/>
            <person name="Hauser L."/>
            <person name="Kyrpides N."/>
            <person name="Kim E."/>
            <person name="Stahl D."/>
            <person name="Richardson P."/>
        </authorList>
    </citation>
    <scope>NUCLEOTIDE SEQUENCE [LARGE SCALE GENOMIC DNA]</scope>
    <source>
        <strain>AAC00-1</strain>
    </source>
</reference>
<feature type="chain" id="PRO_0000377047" description="tRNA dimethylallyltransferase">
    <location>
        <begin position="1"/>
        <end position="350"/>
    </location>
</feature>
<feature type="region of interest" description="Interaction with substrate tRNA" evidence="1">
    <location>
        <begin position="63"/>
        <end position="66"/>
    </location>
</feature>
<feature type="region of interest" description="Interaction with substrate tRNA" evidence="1">
    <location>
        <begin position="187"/>
        <end position="191"/>
    </location>
</feature>
<feature type="region of interest" description="Interaction with substrate tRNA" evidence="1">
    <location>
        <begin position="274"/>
        <end position="279"/>
    </location>
</feature>
<feature type="binding site" evidence="1">
    <location>
        <begin position="34"/>
        <end position="41"/>
    </location>
    <ligand>
        <name>ATP</name>
        <dbReference type="ChEBI" id="CHEBI:30616"/>
    </ligand>
</feature>
<feature type="binding site" evidence="1">
    <location>
        <begin position="36"/>
        <end position="41"/>
    </location>
    <ligand>
        <name>substrate</name>
    </ligand>
</feature>
<feature type="site" description="Interaction with substrate tRNA" evidence="1">
    <location>
        <position position="129"/>
    </location>
</feature>
<feature type="site" description="Interaction with substrate tRNA" evidence="1">
    <location>
        <position position="151"/>
    </location>
</feature>
<accession>A1TLP7</accession>
<dbReference type="EC" id="2.5.1.75" evidence="1"/>
<dbReference type="EMBL" id="CP000512">
    <property type="protein sequence ID" value="ABM31885.1"/>
    <property type="molecule type" value="Genomic_DNA"/>
</dbReference>
<dbReference type="RefSeq" id="WP_011794437.1">
    <property type="nucleotide sequence ID" value="NC_008752.1"/>
</dbReference>
<dbReference type="SMR" id="A1TLP7"/>
<dbReference type="STRING" id="397945.Aave_1294"/>
<dbReference type="GeneID" id="79790957"/>
<dbReference type="KEGG" id="aav:Aave_1294"/>
<dbReference type="eggNOG" id="COG0324">
    <property type="taxonomic scope" value="Bacteria"/>
</dbReference>
<dbReference type="HOGENOM" id="CLU_032616_0_0_4"/>
<dbReference type="OrthoDB" id="9776390at2"/>
<dbReference type="Proteomes" id="UP000002596">
    <property type="component" value="Chromosome"/>
</dbReference>
<dbReference type="GO" id="GO:0005524">
    <property type="term" value="F:ATP binding"/>
    <property type="evidence" value="ECO:0007669"/>
    <property type="project" value="UniProtKB-UniRule"/>
</dbReference>
<dbReference type="GO" id="GO:0052381">
    <property type="term" value="F:tRNA dimethylallyltransferase activity"/>
    <property type="evidence" value="ECO:0007669"/>
    <property type="project" value="UniProtKB-UniRule"/>
</dbReference>
<dbReference type="GO" id="GO:0006400">
    <property type="term" value="P:tRNA modification"/>
    <property type="evidence" value="ECO:0007669"/>
    <property type="project" value="TreeGrafter"/>
</dbReference>
<dbReference type="FunFam" id="1.10.20.140:FF:000001">
    <property type="entry name" value="tRNA dimethylallyltransferase"/>
    <property type="match status" value="1"/>
</dbReference>
<dbReference type="Gene3D" id="1.10.20.140">
    <property type="match status" value="1"/>
</dbReference>
<dbReference type="Gene3D" id="3.40.50.300">
    <property type="entry name" value="P-loop containing nucleotide triphosphate hydrolases"/>
    <property type="match status" value="1"/>
</dbReference>
<dbReference type="HAMAP" id="MF_00185">
    <property type="entry name" value="IPP_trans"/>
    <property type="match status" value="1"/>
</dbReference>
<dbReference type="InterPro" id="IPR039657">
    <property type="entry name" value="Dimethylallyltransferase"/>
</dbReference>
<dbReference type="InterPro" id="IPR018022">
    <property type="entry name" value="IPT"/>
</dbReference>
<dbReference type="InterPro" id="IPR027417">
    <property type="entry name" value="P-loop_NTPase"/>
</dbReference>
<dbReference type="NCBIfam" id="TIGR00174">
    <property type="entry name" value="miaA"/>
    <property type="match status" value="1"/>
</dbReference>
<dbReference type="PANTHER" id="PTHR11088">
    <property type="entry name" value="TRNA DIMETHYLALLYLTRANSFERASE"/>
    <property type="match status" value="1"/>
</dbReference>
<dbReference type="PANTHER" id="PTHR11088:SF60">
    <property type="entry name" value="TRNA DIMETHYLALLYLTRANSFERASE"/>
    <property type="match status" value="1"/>
</dbReference>
<dbReference type="Pfam" id="PF01715">
    <property type="entry name" value="IPPT"/>
    <property type="match status" value="1"/>
</dbReference>
<dbReference type="SUPFAM" id="SSF52540">
    <property type="entry name" value="P-loop containing nucleoside triphosphate hydrolases"/>
    <property type="match status" value="1"/>
</dbReference>
<gene>
    <name evidence="1" type="primary">miaA</name>
    <name type="ordered locus">Aave_1294</name>
</gene>
<keyword id="KW-0067">ATP-binding</keyword>
<keyword id="KW-0460">Magnesium</keyword>
<keyword id="KW-0547">Nucleotide-binding</keyword>
<keyword id="KW-0808">Transferase</keyword>
<keyword id="KW-0819">tRNA processing</keyword>
<proteinExistence type="inferred from homology"/>
<organism>
    <name type="scientific">Paracidovorax citrulli (strain AAC00-1)</name>
    <name type="common">Acidovorax citrulli</name>
    <dbReference type="NCBI Taxonomy" id="397945"/>
    <lineage>
        <taxon>Bacteria</taxon>
        <taxon>Pseudomonadati</taxon>
        <taxon>Pseudomonadota</taxon>
        <taxon>Betaproteobacteria</taxon>
        <taxon>Burkholderiales</taxon>
        <taxon>Comamonadaceae</taxon>
        <taxon>Paracidovorax</taxon>
    </lineage>
</organism>
<name>MIAA_PARC0</name>
<protein>
    <recommendedName>
        <fullName evidence="1">tRNA dimethylallyltransferase</fullName>
        <ecNumber evidence="1">2.5.1.75</ecNumber>
    </recommendedName>
    <alternativeName>
        <fullName evidence="1">Dimethylallyl diphosphate:tRNA dimethylallyltransferase</fullName>
        <shortName evidence="1">DMAPP:tRNA dimethylallyltransferase</shortName>
        <shortName evidence="1">DMATase</shortName>
    </alternativeName>
    <alternativeName>
        <fullName evidence="1">Isopentenyl-diphosphate:tRNA isopentenyltransferase</fullName>
        <shortName evidence="1">IPP transferase</shortName>
        <shortName evidence="1">IPPT</shortName>
        <shortName evidence="1">IPTase</shortName>
    </alternativeName>
</protein>
<evidence type="ECO:0000255" key="1">
    <source>
        <dbReference type="HAMAP-Rule" id="MF_00185"/>
    </source>
</evidence>
<comment type="function">
    <text evidence="1">Catalyzes the transfer of a dimethylallyl group onto the adenine at position 37 in tRNAs that read codons beginning with uridine, leading to the formation of N6-(dimethylallyl)adenosine (i(6)A).</text>
</comment>
<comment type="catalytic activity">
    <reaction evidence="1">
        <text>adenosine(37) in tRNA + dimethylallyl diphosphate = N(6)-dimethylallyladenosine(37) in tRNA + diphosphate</text>
        <dbReference type="Rhea" id="RHEA:26482"/>
        <dbReference type="Rhea" id="RHEA-COMP:10162"/>
        <dbReference type="Rhea" id="RHEA-COMP:10375"/>
        <dbReference type="ChEBI" id="CHEBI:33019"/>
        <dbReference type="ChEBI" id="CHEBI:57623"/>
        <dbReference type="ChEBI" id="CHEBI:74411"/>
        <dbReference type="ChEBI" id="CHEBI:74415"/>
        <dbReference type="EC" id="2.5.1.75"/>
    </reaction>
</comment>
<comment type="cofactor">
    <cofactor evidence="1">
        <name>Mg(2+)</name>
        <dbReference type="ChEBI" id="CHEBI:18420"/>
    </cofactor>
</comment>
<comment type="subunit">
    <text evidence="1">Monomer.</text>
</comment>
<comment type="similarity">
    <text evidence="1">Belongs to the IPP transferase family.</text>
</comment>
<sequence>MSTPPSLPATGVPAPHLPRGAAAPALPACLALAGPTASGKTAGALALARALAPHRPVEIVSVDSALVYRGMDIGTAKPTAAEQAAVPHHLIDIRDPLQPYSAAEFVADAQRLVREIQARGALPLLVGGTMLYFKALWDGIDDMPPADAAVRARLEAQAAAEGWPALHAELARVDPQTAARLAPGDSQRIQRALEVWHVSGRPLSSFHTRSRAAGEAAGAARMSMPLFSLEPQDRAWLHGRIAQRFDAMLDEGFVEEVRRLRARGDLHPDLPSMRCVGYRQAWEALYEEARTGRLPLAQLRERGIAATRQLAKRQVTWLRSMPWRHAIACDAPDATQRWVAAALHALGVPA</sequence>